<evidence type="ECO:0000255" key="1">
    <source>
        <dbReference type="HAMAP-Rule" id="MF_00652"/>
    </source>
</evidence>
<gene>
    <name type="ordered locus">CGSHiGG_08495</name>
</gene>
<feature type="chain" id="PRO_1000061607" description="UPF0246 protein CGSHiGG_08495">
    <location>
        <begin position="1"/>
        <end position="258"/>
    </location>
</feature>
<proteinExistence type="inferred from homology"/>
<comment type="similarity">
    <text evidence="1">Belongs to the UPF0246 family.</text>
</comment>
<name>Y8495_HAEIG</name>
<dbReference type="EMBL" id="CP000672">
    <property type="protein sequence ID" value="ABR00529.1"/>
    <property type="molecule type" value="Genomic_DNA"/>
</dbReference>
<dbReference type="SMR" id="A5UIC3"/>
<dbReference type="KEGG" id="hiq:CGSHiGG_08495"/>
<dbReference type="HOGENOM" id="CLU_061989_0_0_6"/>
<dbReference type="Proteomes" id="UP000001990">
    <property type="component" value="Chromosome"/>
</dbReference>
<dbReference type="GO" id="GO:0005829">
    <property type="term" value="C:cytosol"/>
    <property type="evidence" value="ECO:0007669"/>
    <property type="project" value="TreeGrafter"/>
</dbReference>
<dbReference type="GO" id="GO:0033194">
    <property type="term" value="P:response to hydroperoxide"/>
    <property type="evidence" value="ECO:0007669"/>
    <property type="project" value="TreeGrafter"/>
</dbReference>
<dbReference type="HAMAP" id="MF_00652">
    <property type="entry name" value="UPF0246"/>
    <property type="match status" value="1"/>
</dbReference>
<dbReference type="InterPro" id="IPR005583">
    <property type="entry name" value="YaaA"/>
</dbReference>
<dbReference type="NCBIfam" id="NF002541">
    <property type="entry name" value="PRK02101.1-1"/>
    <property type="match status" value="1"/>
</dbReference>
<dbReference type="NCBIfam" id="NF002542">
    <property type="entry name" value="PRK02101.1-3"/>
    <property type="match status" value="1"/>
</dbReference>
<dbReference type="PANTHER" id="PTHR30283:SF4">
    <property type="entry name" value="PEROXIDE STRESS RESISTANCE PROTEIN YAAA"/>
    <property type="match status" value="1"/>
</dbReference>
<dbReference type="PANTHER" id="PTHR30283">
    <property type="entry name" value="PEROXIDE STRESS RESPONSE PROTEIN YAAA"/>
    <property type="match status" value="1"/>
</dbReference>
<dbReference type="Pfam" id="PF03883">
    <property type="entry name" value="H2O2_YaaD"/>
    <property type="match status" value="1"/>
</dbReference>
<accession>A5UIC3</accession>
<sequence>MLAIISPAKTLDFESAVKNFPVSQPHFTDYSEQLIEVCRKLSPQDLSSLMSISDKLAGLNAARFAEWTKIHNENNSRPALFAFKGDVYTGLDADSLSEDDVIFAQSHLRMLSGLYGLLKPLDLMQPYRLEMGTKLANPKGKDLYAFWGNVITQAVQQAIDAQGDNVLVNLASDEYYKSVKENQLNAKIIKPVFLDNKNGKYKVISFYAKKARGLMCRYLIQHRLTNIEQLKEFDLAGYWFDSASSTETEFVFKRDINE</sequence>
<reference key="1">
    <citation type="journal article" date="2007" name="Genome Biol.">
        <title>Characterization and modeling of the Haemophilus influenzae core and supragenomes based on the complete genomic sequences of Rd and 12 clinical nontypeable strains.</title>
        <authorList>
            <person name="Hogg J.S."/>
            <person name="Hu F.Z."/>
            <person name="Janto B."/>
            <person name="Boissy R."/>
            <person name="Hayes J."/>
            <person name="Keefe R."/>
            <person name="Post J.C."/>
            <person name="Ehrlich G.D."/>
        </authorList>
    </citation>
    <scope>NUCLEOTIDE SEQUENCE [LARGE SCALE GENOMIC DNA]</scope>
    <source>
        <strain>PittGG</strain>
    </source>
</reference>
<organism>
    <name type="scientific">Haemophilus influenzae (strain PittGG)</name>
    <dbReference type="NCBI Taxonomy" id="374931"/>
    <lineage>
        <taxon>Bacteria</taxon>
        <taxon>Pseudomonadati</taxon>
        <taxon>Pseudomonadota</taxon>
        <taxon>Gammaproteobacteria</taxon>
        <taxon>Pasteurellales</taxon>
        <taxon>Pasteurellaceae</taxon>
        <taxon>Haemophilus</taxon>
    </lineage>
</organism>
<protein>
    <recommendedName>
        <fullName evidence="1">UPF0246 protein CGSHiGG_08495</fullName>
    </recommendedName>
</protein>